<evidence type="ECO:0000255" key="1">
    <source>
        <dbReference type="HAMAP-Rule" id="MF_00242"/>
    </source>
</evidence>
<gene>
    <name evidence="1" type="primary">arcA</name>
    <name type="ordered locus">Spy49_1197c</name>
</gene>
<feature type="chain" id="PRO_1000100749" description="Arginine deiminase">
    <location>
        <begin position="1"/>
        <end position="411"/>
    </location>
</feature>
<feature type="active site" description="Amidino-cysteine intermediate" evidence="1">
    <location>
        <position position="401"/>
    </location>
</feature>
<accession>B5XMC3</accession>
<dbReference type="EC" id="3.5.3.6" evidence="1"/>
<dbReference type="EMBL" id="CP000829">
    <property type="protein sequence ID" value="ACI61485.1"/>
    <property type="molecule type" value="Genomic_DNA"/>
</dbReference>
<dbReference type="SMR" id="B5XMC3"/>
<dbReference type="KEGG" id="soz:Spy49_1197c"/>
<dbReference type="HOGENOM" id="CLU_052662_0_1_9"/>
<dbReference type="BRENDA" id="3.5.3.6">
    <property type="organism ID" value="5935"/>
</dbReference>
<dbReference type="UniPathway" id="UPA00254">
    <property type="reaction ID" value="UER00364"/>
</dbReference>
<dbReference type="Proteomes" id="UP000001039">
    <property type="component" value="Chromosome"/>
</dbReference>
<dbReference type="GO" id="GO:0005737">
    <property type="term" value="C:cytoplasm"/>
    <property type="evidence" value="ECO:0007669"/>
    <property type="project" value="UniProtKB-SubCell"/>
</dbReference>
<dbReference type="GO" id="GO:0016990">
    <property type="term" value="F:arginine deiminase activity"/>
    <property type="evidence" value="ECO:0007669"/>
    <property type="project" value="UniProtKB-UniRule"/>
</dbReference>
<dbReference type="GO" id="GO:0019547">
    <property type="term" value="P:arginine catabolic process to ornithine"/>
    <property type="evidence" value="ECO:0007669"/>
    <property type="project" value="UniProtKB-UniRule"/>
</dbReference>
<dbReference type="GO" id="GO:0019546">
    <property type="term" value="P:arginine deiminase pathway"/>
    <property type="evidence" value="ECO:0007669"/>
    <property type="project" value="TreeGrafter"/>
</dbReference>
<dbReference type="Gene3D" id="1.10.3930.10">
    <property type="entry name" value="Arginine deiminase"/>
    <property type="match status" value="1"/>
</dbReference>
<dbReference type="Gene3D" id="3.75.10.10">
    <property type="entry name" value="L-arginine/glycine Amidinotransferase, Chain A"/>
    <property type="match status" value="1"/>
</dbReference>
<dbReference type="HAMAP" id="MF_00242">
    <property type="entry name" value="Arg_deiminase"/>
    <property type="match status" value="1"/>
</dbReference>
<dbReference type="InterPro" id="IPR003876">
    <property type="entry name" value="Arg_deiminase"/>
</dbReference>
<dbReference type="NCBIfam" id="TIGR01078">
    <property type="entry name" value="arcA"/>
    <property type="match status" value="1"/>
</dbReference>
<dbReference type="NCBIfam" id="NF002381">
    <property type="entry name" value="PRK01388.1"/>
    <property type="match status" value="1"/>
</dbReference>
<dbReference type="PANTHER" id="PTHR47271">
    <property type="entry name" value="ARGININE DEIMINASE"/>
    <property type="match status" value="1"/>
</dbReference>
<dbReference type="PANTHER" id="PTHR47271:SF2">
    <property type="entry name" value="ARGININE DEIMINASE"/>
    <property type="match status" value="1"/>
</dbReference>
<dbReference type="Pfam" id="PF02274">
    <property type="entry name" value="ADI"/>
    <property type="match status" value="1"/>
</dbReference>
<dbReference type="PIRSF" id="PIRSF006356">
    <property type="entry name" value="Arg_deiminase"/>
    <property type="match status" value="1"/>
</dbReference>
<dbReference type="PRINTS" id="PR01466">
    <property type="entry name" value="ARGDEIMINASE"/>
</dbReference>
<dbReference type="SUPFAM" id="SSF55909">
    <property type="entry name" value="Pentein"/>
    <property type="match status" value="1"/>
</dbReference>
<comment type="catalytic activity">
    <reaction evidence="1">
        <text>L-arginine + H2O = L-citrulline + NH4(+)</text>
        <dbReference type="Rhea" id="RHEA:19597"/>
        <dbReference type="ChEBI" id="CHEBI:15377"/>
        <dbReference type="ChEBI" id="CHEBI:28938"/>
        <dbReference type="ChEBI" id="CHEBI:32682"/>
        <dbReference type="ChEBI" id="CHEBI:57743"/>
        <dbReference type="EC" id="3.5.3.6"/>
    </reaction>
</comment>
<comment type="pathway">
    <text evidence="1">Amino-acid degradation; L-arginine degradation via ADI pathway; carbamoyl phosphate from L-arginine: step 1/2.</text>
</comment>
<comment type="subcellular location">
    <subcellularLocation>
        <location evidence="1">Cytoplasm</location>
    </subcellularLocation>
</comment>
<comment type="similarity">
    <text evidence="1">Belongs to the arginine deiminase family.</text>
</comment>
<organism>
    <name type="scientific">Streptococcus pyogenes serotype M49 (strain NZ131)</name>
    <dbReference type="NCBI Taxonomy" id="471876"/>
    <lineage>
        <taxon>Bacteria</taxon>
        <taxon>Bacillati</taxon>
        <taxon>Bacillota</taxon>
        <taxon>Bacilli</taxon>
        <taxon>Lactobacillales</taxon>
        <taxon>Streptococcaceae</taxon>
        <taxon>Streptococcus</taxon>
    </lineage>
</organism>
<reference key="1">
    <citation type="journal article" date="2008" name="J. Bacteriol.">
        <title>Genome sequence of a nephritogenic and highly transformable M49 strain of Streptococcus pyogenes.</title>
        <authorList>
            <person name="McShan W.M."/>
            <person name="Ferretti J.J."/>
            <person name="Karasawa T."/>
            <person name="Suvorov A.N."/>
            <person name="Lin S."/>
            <person name="Qin B."/>
            <person name="Jia H."/>
            <person name="Kenton S."/>
            <person name="Najar F."/>
            <person name="Wu H."/>
            <person name="Scott J."/>
            <person name="Roe B.A."/>
            <person name="Savic D.J."/>
        </authorList>
    </citation>
    <scope>NUCLEOTIDE SEQUENCE [LARGE SCALE GENOMIC DNA]</scope>
    <source>
        <strain>NZ131</strain>
    </source>
</reference>
<protein>
    <recommendedName>
        <fullName evidence="1">Arginine deiminase</fullName>
        <shortName evidence="1">ADI</shortName>
        <ecNumber evidence="1">3.5.3.6</ecNumber>
    </recommendedName>
    <alternativeName>
        <fullName evidence="1">Arginine dihydrolase</fullName>
        <shortName evidence="1">AD</shortName>
    </alternativeName>
</protein>
<proteinExistence type="inferred from homology"/>
<keyword id="KW-0056">Arginine metabolism</keyword>
<keyword id="KW-0963">Cytoplasm</keyword>
<keyword id="KW-0378">Hydrolase</keyword>
<name>ARCA_STRPZ</name>
<sequence>MTAQTPIHVYSEIGKLKKVLLHRPGKEIENLMPDYLERLLFDDIPFLEDAQKEHDAFAQALRDEGIEVLDLETLAAESLGTPEIREAFIDEYLSEANIRGRATKKAIRELLMAIEDNQELIEKTMAGVQKSELPEIPASEKGLTDLVESNYPFAIDPMPNLYFTRDPFATIGTGVSLNHMFSETRNRETLYGKYIFTHHPIYGGGKVPMVYDRNETTRIEGGDELVLSKDVLAVGISQRTDAASIEKLLVNIFKQNLGFKKVLAFEFANNRKFMHLDTVFTMVDYDKFTIHPEIEGDLRVYSVTYDNEELHIVEEKGDLAELLAANLGVEKVDLIRCGGDNLVAAGREQWNDGSNTLTIAPGVVVVYNRNTITNAILESKGLKLIKIHGSELVRGRGGPRCMSMPFEREDI</sequence>